<reference key="1">
    <citation type="journal article" date="2008" name="J. Bacteriol.">
        <title>Complete genome sequence of uropathogenic Proteus mirabilis, a master of both adherence and motility.</title>
        <authorList>
            <person name="Pearson M.M."/>
            <person name="Sebaihia M."/>
            <person name="Churcher C."/>
            <person name="Quail M.A."/>
            <person name="Seshasayee A.S."/>
            <person name="Luscombe N.M."/>
            <person name="Abdellah Z."/>
            <person name="Arrosmith C."/>
            <person name="Atkin B."/>
            <person name="Chillingworth T."/>
            <person name="Hauser H."/>
            <person name="Jagels K."/>
            <person name="Moule S."/>
            <person name="Mungall K."/>
            <person name="Norbertczak H."/>
            <person name="Rabbinowitsch E."/>
            <person name="Walker D."/>
            <person name="Whithead S."/>
            <person name="Thomson N.R."/>
            <person name="Rather P.N."/>
            <person name="Parkhill J."/>
            <person name="Mobley H.L.T."/>
        </authorList>
    </citation>
    <scope>NUCLEOTIDE SEQUENCE [LARGE SCALE GENOMIC DNA]</scope>
    <source>
        <strain>HI4320</strain>
    </source>
</reference>
<comment type="function">
    <text evidence="1">Cell division inhibitor that blocks the formation of polar Z ring septums. Rapidly oscillates between the poles of the cell to destabilize FtsZ filaments that have formed before they mature into polar Z rings. Prevents FtsZ polymerization.</text>
</comment>
<comment type="subunit">
    <text evidence="1">Interacts with MinD and FtsZ.</text>
</comment>
<comment type="similarity">
    <text evidence="1">Belongs to the MinC family.</text>
</comment>
<dbReference type="EMBL" id="AM942759">
    <property type="protein sequence ID" value="CAR42501.1"/>
    <property type="molecule type" value="Genomic_DNA"/>
</dbReference>
<dbReference type="RefSeq" id="WP_004242783.1">
    <property type="nucleotide sequence ID" value="NC_010554.1"/>
</dbReference>
<dbReference type="SMR" id="B4EVV7"/>
<dbReference type="EnsemblBacteria" id="CAR42501">
    <property type="protein sequence ID" value="CAR42501"/>
    <property type="gene ID" value="PMI1170"/>
</dbReference>
<dbReference type="GeneID" id="6802265"/>
<dbReference type="KEGG" id="pmr:PMI1170"/>
<dbReference type="eggNOG" id="COG0850">
    <property type="taxonomic scope" value="Bacteria"/>
</dbReference>
<dbReference type="HOGENOM" id="CLU_067812_0_1_6"/>
<dbReference type="Proteomes" id="UP000008319">
    <property type="component" value="Chromosome"/>
</dbReference>
<dbReference type="GO" id="GO:0000902">
    <property type="term" value="P:cell morphogenesis"/>
    <property type="evidence" value="ECO:0007669"/>
    <property type="project" value="InterPro"/>
</dbReference>
<dbReference type="GO" id="GO:0000917">
    <property type="term" value="P:division septum assembly"/>
    <property type="evidence" value="ECO:0007669"/>
    <property type="project" value="UniProtKB-KW"/>
</dbReference>
<dbReference type="GO" id="GO:0051302">
    <property type="term" value="P:regulation of cell division"/>
    <property type="evidence" value="ECO:0007669"/>
    <property type="project" value="InterPro"/>
</dbReference>
<dbReference type="GO" id="GO:1901891">
    <property type="term" value="P:regulation of cell septum assembly"/>
    <property type="evidence" value="ECO:0007669"/>
    <property type="project" value="InterPro"/>
</dbReference>
<dbReference type="Gene3D" id="2.160.20.70">
    <property type="match status" value="1"/>
</dbReference>
<dbReference type="Gene3D" id="3.30.70.260">
    <property type="match status" value="1"/>
</dbReference>
<dbReference type="HAMAP" id="MF_00267">
    <property type="entry name" value="MinC"/>
    <property type="match status" value="1"/>
</dbReference>
<dbReference type="InterPro" id="IPR016098">
    <property type="entry name" value="CAP/MinC_C"/>
</dbReference>
<dbReference type="InterPro" id="IPR013033">
    <property type="entry name" value="MinC"/>
</dbReference>
<dbReference type="InterPro" id="IPR036145">
    <property type="entry name" value="MinC_C_sf"/>
</dbReference>
<dbReference type="InterPro" id="IPR007874">
    <property type="entry name" value="MinC_N"/>
</dbReference>
<dbReference type="InterPro" id="IPR005526">
    <property type="entry name" value="Septum_form_inhib_MinC_C"/>
</dbReference>
<dbReference type="NCBIfam" id="TIGR01222">
    <property type="entry name" value="minC"/>
    <property type="match status" value="1"/>
</dbReference>
<dbReference type="PANTHER" id="PTHR34108">
    <property type="entry name" value="SEPTUM SITE-DETERMINING PROTEIN MINC"/>
    <property type="match status" value="1"/>
</dbReference>
<dbReference type="PANTHER" id="PTHR34108:SF1">
    <property type="entry name" value="SEPTUM SITE-DETERMINING PROTEIN MINC"/>
    <property type="match status" value="1"/>
</dbReference>
<dbReference type="Pfam" id="PF03775">
    <property type="entry name" value="MinC_C"/>
    <property type="match status" value="1"/>
</dbReference>
<dbReference type="Pfam" id="PF05209">
    <property type="entry name" value="MinC_N"/>
    <property type="match status" value="1"/>
</dbReference>
<dbReference type="SUPFAM" id="SSF63848">
    <property type="entry name" value="Cell-division inhibitor MinC, C-terminal domain"/>
    <property type="match status" value="1"/>
</dbReference>
<evidence type="ECO:0000255" key="1">
    <source>
        <dbReference type="HAMAP-Rule" id="MF_00267"/>
    </source>
</evidence>
<gene>
    <name evidence="1" type="primary">minC</name>
    <name type="ordered locus">PMI1170</name>
</gene>
<organism>
    <name type="scientific">Proteus mirabilis (strain HI4320)</name>
    <dbReference type="NCBI Taxonomy" id="529507"/>
    <lineage>
        <taxon>Bacteria</taxon>
        <taxon>Pseudomonadati</taxon>
        <taxon>Pseudomonadota</taxon>
        <taxon>Gammaproteobacteria</taxon>
        <taxon>Enterobacterales</taxon>
        <taxon>Morganellaceae</taxon>
        <taxon>Proteus</taxon>
    </lineage>
</organism>
<name>MINC_PROMH</name>
<protein>
    <recommendedName>
        <fullName evidence="1">Probable septum site-determining protein MinC</fullName>
    </recommendedName>
</protein>
<sequence length="233" mass="25125">MSNTPIELKGSNFTLSVLHLNDGSPKVIRQAISDKIAQAPQFLKNAPVVINVSAIADQTIDFKKLRRIVEDAGLRVVGISGSHDAQQKEAIIAAQLPILNEGKITKPAAQANNDKTNEVPINVRQKTKIIHTPVRSGQRIYAPNSDLVVLSNVSAGAELIADGNVHIYGVLRGRVLAGASGDQESHIFCTHLSAELVSIAGQYWLSDQIPTDFVGKSVQLSLQENELTIENLI</sequence>
<keyword id="KW-0131">Cell cycle</keyword>
<keyword id="KW-0132">Cell division</keyword>
<keyword id="KW-1185">Reference proteome</keyword>
<keyword id="KW-0717">Septation</keyword>
<feature type="chain" id="PRO_1000114285" description="Probable septum site-determining protein MinC">
    <location>
        <begin position="1"/>
        <end position="233"/>
    </location>
</feature>
<proteinExistence type="inferred from homology"/>
<accession>B4EVV7</accession>